<gene>
    <name type="primary">yitW</name>
    <name type="ordered locus">BSU11160</name>
</gene>
<feature type="chain" id="PRO_0000359939" description="Fe-S protein maturation auxiliary factor YitW">
    <location>
        <begin position="1"/>
        <end position="102"/>
    </location>
</feature>
<evidence type="ECO:0000250" key="1">
    <source>
        <dbReference type="UniProtKB" id="A0A0H2XI17"/>
    </source>
</evidence>
<evidence type="ECO:0000305" key="2"/>
<protein>
    <recommendedName>
        <fullName evidence="1">Fe-S protein maturation auxiliary factor YitW</fullName>
    </recommendedName>
    <alternativeName>
        <fullName evidence="1">Iron-sulfur cluster assembly factor YitW</fullName>
    </alternativeName>
</protein>
<accession>P70949</accession>
<accession>O08142</accession>
<accession>Q796P6</accession>
<name>SUFT_BACSU</name>
<reference key="1">
    <citation type="journal article" date="1997" name="Microbiology">
        <title>Sequencing of regions downstream of addA (98 degrees) and citG (289 degrees) in Bacillus subtilis.</title>
        <authorList>
            <person name="Medina N."/>
            <person name="Vannier F."/>
            <person name="Roche B."/>
            <person name="Autret S."/>
            <person name="Levine A."/>
            <person name="Seror S.J."/>
        </authorList>
    </citation>
    <scope>NUCLEOTIDE SEQUENCE [GENOMIC DNA]</scope>
    <source>
        <strain>168</strain>
    </source>
</reference>
<reference key="2">
    <citation type="journal article" date="1997" name="Microbiology">
        <title>A 10.3 kbp segment from nprB to argJ at the 102 degrees region of the Bacillus subtilis chromosome.</title>
        <authorList>
            <person name="Levine A."/>
            <person name="Vannier F."/>
            <person name="Roche B."/>
            <person name="Autret S."/>
            <person name="Mavel D."/>
            <person name="Seror S.J."/>
        </authorList>
    </citation>
    <scope>NUCLEOTIDE SEQUENCE [GENOMIC DNA]</scope>
    <source>
        <strain>168</strain>
    </source>
</reference>
<reference key="3">
    <citation type="journal article" date="1997" name="Nature">
        <title>The complete genome sequence of the Gram-positive bacterium Bacillus subtilis.</title>
        <authorList>
            <person name="Kunst F."/>
            <person name="Ogasawara N."/>
            <person name="Moszer I."/>
            <person name="Albertini A.M."/>
            <person name="Alloni G."/>
            <person name="Azevedo V."/>
            <person name="Bertero M.G."/>
            <person name="Bessieres P."/>
            <person name="Bolotin A."/>
            <person name="Borchert S."/>
            <person name="Borriss R."/>
            <person name="Boursier L."/>
            <person name="Brans A."/>
            <person name="Braun M."/>
            <person name="Brignell S.C."/>
            <person name="Bron S."/>
            <person name="Brouillet S."/>
            <person name="Bruschi C.V."/>
            <person name="Caldwell B."/>
            <person name="Capuano V."/>
            <person name="Carter N.M."/>
            <person name="Choi S.-K."/>
            <person name="Codani J.-J."/>
            <person name="Connerton I.F."/>
            <person name="Cummings N.J."/>
            <person name="Daniel R.A."/>
            <person name="Denizot F."/>
            <person name="Devine K.M."/>
            <person name="Duesterhoeft A."/>
            <person name="Ehrlich S.D."/>
            <person name="Emmerson P.T."/>
            <person name="Entian K.-D."/>
            <person name="Errington J."/>
            <person name="Fabret C."/>
            <person name="Ferrari E."/>
            <person name="Foulger D."/>
            <person name="Fritz C."/>
            <person name="Fujita M."/>
            <person name="Fujita Y."/>
            <person name="Fuma S."/>
            <person name="Galizzi A."/>
            <person name="Galleron N."/>
            <person name="Ghim S.-Y."/>
            <person name="Glaser P."/>
            <person name="Goffeau A."/>
            <person name="Golightly E.J."/>
            <person name="Grandi G."/>
            <person name="Guiseppi G."/>
            <person name="Guy B.J."/>
            <person name="Haga K."/>
            <person name="Haiech J."/>
            <person name="Harwood C.R."/>
            <person name="Henaut A."/>
            <person name="Hilbert H."/>
            <person name="Holsappel S."/>
            <person name="Hosono S."/>
            <person name="Hullo M.-F."/>
            <person name="Itaya M."/>
            <person name="Jones L.-M."/>
            <person name="Joris B."/>
            <person name="Karamata D."/>
            <person name="Kasahara Y."/>
            <person name="Klaerr-Blanchard M."/>
            <person name="Klein C."/>
            <person name="Kobayashi Y."/>
            <person name="Koetter P."/>
            <person name="Koningstein G."/>
            <person name="Krogh S."/>
            <person name="Kumano M."/>
            <person name="Kurita K."/>
            <person name="Lapidus A."/>
            <person name="Lardinois S."/>
            <person name="Lauber J."/>
            <person name="Lazarevic V."/>
            <person name="Lee S.-M."/>
            <person name="Levine A."/>
            <person name="Liu H."/>
            <person name="Masuda S."/>
            <person name="Mauel C."/>
            <person name="Medigue C."/>
            <person name="Medina N."/>
            <person name="Mellado R.P."/>
            <person name="Mizuno M."/>
            <person name="Moestl D."/>
            <person name="Nakai S."/>
            <person name="Noback M."/>
            <person name="Noone D."/>
            <person name="O'Reilly M."/>
            <person name="Ogawa K."/>
            <person name="Ogiwara A."/>
            <person name="Oudega B."/>
            <person name="Park S.-H."/>
            <person name="Parro V."/>
            <person name="Pohl T.M."/>
            <person name="Portetelle D."/>
            <person name="Porwollik S."/>
            <person name="Prescott A.M."/>
            <person name="Presecan E."/>
            <person name="Pujic P."/>
            <person name="Purnelle B."/>
            <person name="Rapoport G."/>
            <person name="Rey M."/>
            <person name="Reynolds S."/>
            <person name="Rieger M."/>
            <person name="Rivolta C."/>
            <person name="Rocha E."/>
            <person name="Roche B."/>
            <person name="Rose M."/>
            <person name="Sadaie Y."/>
            <person name="Sato T."/>
            <person name="Scanlan E."/>
            <person name="Schleich S."/>
            <person name="Schroeter R."/>
            <person name="Scoffone F."/>
            <person name="Sekiguchi J."/>
            <person name="Sekowska A."/>
            <person name="Seror S.J."/>
            <person name="Serror P."/>
            <person name="Shin B.-S."/>
            <person name="Soldo B."/>
            <person name="Sorokin A."/>
            <person name="Tacconi E."/>
            <person name="Takagi T."/>
            <person name="Takahashi H."/>
            <person name="Takemaru K."/>
            <person name="Takeuchi M."/>
            <person name="Tamakoshi A."/>
            <person name="Tanaka T."/>
            <person name="Terpstra P."/>
            <person name="Tognoni A."/>
            <person name="Tosato V."/>
            <person name="Uchiyama S."/>
            <person name="Vandenbol M."/>
            <person name="Vannier F."/>
            <person name="Vassarotti A."/>
            <person name="Viari A."/>
            <person name="Wambutt R."/>
            <person name="Wedler E."/>
            <person name="Wedler H."/>
            <person name="Weitzenegger T."/>
            <person name="Winters P."/>
            <person name="Wipat A."/>
            <person name="Yamamoto H."/>
            <person name="Yamane K."/>
            <person name="Yasumoto K."/>
            <person name="Yata K."/>
            <person name="Yoshida K."/>
            <person name="Yoshikawa H.-F."/>
            <person name="Zumstein E."/>
            <person name="Yoshikawa H."/>
            <person name="Danchin A."/>
        </authorList>
    </citation>
    <scope>NUCLEOTIDE SEQUENCE [LARGE SCALE GENOMIC DNA]</scope>
    <source>
        <strain>168</strain>
    </source>
</reference>
<dbReference type="EMBL" id="Y09476">
    <property type="protein sequence ID" value="CAA70634.1"/>
    <property type="molecule type" value="Genomic_DNA"/>
</dbReference>
<dbReference type="EMBL" id="Z79580">
    <property type="protein sequence ID" value="CAB01838.1"/>
    <property type="molecule type" value="Genomic_DNA"/>
</dbReference>
<dbReference type="EMBL" id="AL009126">
    <property type="protein sequence ID" value="CAB12956.1"/>
    <property type="molecule type" value="Genomic_DNA"/>
</dbReference>
<dbReference type="PIR" id="H69841">
    <property type="entry name" value="H69841"/>
</dbReference>
<dbReference type="RefSeq" id="NP_388997.1">
    <property type="nucleotide sequence ID" value="NC_000964.3"/>
</dbReference>
<dbReference type="RefSeq" id="WP_003232998.1">
    <property type="nucleotide sequence ID" value="NZ_OZ025638.1"/>
</dbReference>
<dbReference type="SMR" id="P70949"/>
<dbReference type="FunCoup" id="P70949">
    <property type="interactions" value="157"/>
</dbReference>
<dbReference type="STRING" id="224308.BSU11160"/>
<dbReference type="PaxDb" id="224308-BSU11160"/>
<dbReference type="DNASU" id="936378"/>
<dbReference type="EnsemblBacteria" id="CAB12956">
    <property type="protein sequence ID" value="CAB12956"/>
    <property type="gene ID" value="BSU_11160"/>
</dbReference>
<dbReference type="GeneID" id="936378"/>
<dbReference type="KEGG" id="bsu:BSU11160"/>
<dbReference type="PATRIC" id="fig|224308.179.peg.1200"/>
<dbReference type="eggNOG" id="COG2151">
    <property type="taxonomic scope" value="Bacteria"/>
</dbReference>
<dbReference type="InParanoid" id="P70949"/>
<dbReference type="OrthoDB" id="9805360at2"/>
<dbReference type="PhylomeDB" id="P70949"/>
<dbReference type="BioCyc" id="BSUB:BSU11160-MONOMER"/>
<dbReference type="Proteomes" id="UP000001570">
    <property type="component" value="Chromosome"/>
</dbReference>
<dbReference type="Gene3D" id="3.30.300.130">
    <property type="entry name" value="Fe-S cluster assembly (FSCA)"/>
    <property type="match status" value="1"/>
</dbReference>
<dbReference type="InterPro" id="IPR052339">
    <property type="entry name" value="Fe-S_Maturation_MIP18"/>
</dbReference>
<dbReference type="InterPro" id="IPR034904">
    <property type="entry name" value="FSCA_dom_sf"/>
</dbReference>
<dbReference type="InterPro" id="IPR002744">
    <property type="entry name" value="MIP18-like"/>
</dbReference>
<dbReference type="PANTHER" id="PTHR42831">
    <property type="entry name" value="FE-S PROTEIN MATURATION AUXILIARY FACTOR YITW"/>
    <property type="match status" value="1"/>
</dbReference>
<dbReference type="PANTHER" id="PTHR42831:SF1">
    <property type="entry name" value="FE-S PROTEIN MATURATION AUXILIARY FACTOR YITW"/>
    <property type="match status" value="1"/>
</dbReference>
<dbReference type="Pfam" id="PF01883">
    <property type="entry name" value="FeS_assembly_P"/>
    <property type="match status" value="1"/>
</dbReference>
<dbReference type="SUPFAM" id="SSF117916">
    <property type="entry name" value="Fe-S cluster assembly (FSCA) domain-like"/>
    <property type="match status" value="1"/>
</dbReference>
<keyword id="KW-1185">Reference proteome</keyword>
<proteinExistence type="inferred from homology"/>
<organism>
    <name type="scientific">Bacillus subtilis (strain 168)</name>
    <dbReference type="NCBI Taxonomy" id="224308"/>
    <lineage>
        <taxon>Bacteria</taxon>
        <taxon>Bacillati</taxon>
        <taxon>Bacillota</taxon>
        <taxon>Bacilli</taxon>
        <taxon>Bacillales</taxon>
        <taxon>Bacillaceae</taxon>
        <taxon>Bacillus</taxon>
    </lineage>
</organism>
<sequence>MEEALKENIMGALEQVVDPELGVDIVNLGLVYDVDMDEDGLTHITMTLTSMGCPLAPIIVDEVKKALADLPEVKDTEVHIVWNPPWTRDKMSRYAKIALGIQ</sequence>
<comment type="function">
    <text evidence="1">Involved in the maturation of iron-sulfur (Fe-S) proteins. May function as a Fe-S cluster carrier.</text>
</comment>
<comment type="similarity">
    <text evidence="2">Belongs to the MIP18 family.</text>
</comment>